<organismHost>
    <name type="scientific">Homo sapiens</name>
    <name type="common">Human</name>
    <dbReference type="NCBI Taxonomy" id="9606"/>
</organismHost>
<feature type="chain" id="PRO_0000038152" description="Large delta antigen">
    <location>
        <begin position="1"/>
        <end position="211"/>
    </location>
</feature>
<feature type="propeptide" id="PRO_0000396680" description="Removed in mature form" evidence="3">
    <location>
        <begin position="212"/>
        <end position="214"/>
    </location>
</feature>
<feature type="domain" description="HDAg" evidence="5">
    <location>
        <begin position="20"/>
        <end position="194"/>
    </location>
</feature>
<feature type="region of interest" description="Dimerization" evidence="4">
    <location>
        <begin position="12"/>
        <end position="59"/>
    </location>
</feature>
<feature type="region of interest" description="Disordered" evidence="6">
    <location>
        <begin position="43"/>
        <end position="185"/>
    </location>
</feature>
<feature type="region of interest" description="RNA-binding" evidence="5">
    <location>
        <begin position="96"/>
        <end position="106"/>
    </location>
</feature>
<feature type="region of interest" description="RNAPII-binding" evidence="5">
    <location>
        <begin position="129"/>
        <end position="194"/>
    </location>
</feature>
<feature type="region of interest" description="RNA-binding" evidence="5">
    <location>
        <begin position="135"/>
        <end position="145"/>
    </location>
</feature>
<feature type="short sequence motif" description="Nuclear localization signal" evidence="3">
    <location>
        <begin position="65"/>
        <end position="74"/>
    </location>
</feature>
<feature type="compositionally biased region" description="Basic and acidic residues" evidence="6">
    <location>
        <begin position="128"/>
        <end position="143"/>
    </location>
</feature>
<feature type="modified residue" description="Phosphoserine; by host" evidence="3">
    <location>
        <position position="2"/>
    </location>
</feature>
<feature type="modified residue" description="Omega-N-methylated arginine; by host" evidence="2">
    <location>
        <position position="13"/>
    </location>
</feature>
<feature type="modified residue" description="N6-acetyllysine; by host" evidence="2">
    <location>
        <position position="71"/>
    </location>
</feature>
<feature type="modified residue" description="Phosphoserine; by host" evidence="3">
    <location>
        <position position="122"/>
    </location>
</feature>
<feature type="modified residue" description="Phosphoserine; by host" evidence="3">
    <location>
        <position position="176"/>
    </location>
</feature>
<feature type="modified residue" description="Cysteine methyl ester; by host" evidence="3">
    <location>
        <position position="211"/>
    </location>
</feature>
<feature type="lipid moiety-binding region" description="S-farnesyl cysteine; by host" evidence="3">
    <location>
        <position position="211"/>
    </location>
</feature>
<protein>
    <recommendedName>
        <fullName>Large delta antigen</fullName>
        <shortName>L-HDAg</shortName>
    </recommendedName>
    <alternativeName>
        <fullName>p27</fullName>
    </alternativeName>
</protein>
<dbReference type="EMBL" id="AB037948">
    <property type="protein sequence ID" value="BAB68380.1"/>
    <property type="status" value="ALT_TERM"/>
    <property type="molecule type" value="Genomic_RNA"/>
</dbReference>
<dbReference type="Proteomes" id="UP000008115">
    <property type="component" value="Segment"/>
</dbReference>
<dbReference type="GO" id="GO:0043657">
    <property type="term" value="C:host cell"/>
    <property type="evidence" value="ECO:0007669"/>
    <property type="project" value="GOC"/>
</dbReference>
<dbReference type="GO" id="GO:0044196">
    <property type="term" value="C:host cell nucleolus"/>
    <property type="evidence" value="ECO:0007669"/>
    <property type="project" value="UniProtKB-SubCell"/>
</dbReference>
<dbReference type="GO" id="GO:0044423">
    <property type="term" value="C:virion component"/>
    <property type="evidence" value="ECO:0007669"/>
    <property type="project" value="UniProtKB-KW"/>
</dbReference>
<dbReference type="GO" id="GO:0003723">
    <property type="term" value="F:RNA binding"/>
    <property type="evidence" value="ECO:0007669"/>
    <property type="project" value="UniProtKB-KW"/>
</dbReference>
<dbReference type="GO" id="GO:0046718">
    <property type="term" value="P:symbiont entry into host cell"/>
    <property type="evidence" value="ECO:0007669"/>
    <property type="project" value="UniProtKB-KW"/>
</dbReference>
<dbReference type="GO" id="GO:0075732">
    <property type="term" value="P:viral penetration into host nucleus"/>
    <property type="evidence" value="ECO:0007669"/>
    <property type="project" value="UniProtKB-KW"/>
</dbReference>
<dbReference type="Gene3D" id="4.10.220.40">
    <property type="entry name" value="Delta antigen, N-terminal"/>
    <property type="match status" value="1"/>
</dbReference>
<dbReference type="InterPro" id="IPR027403">
    <property type="entry name" value="Delta_antigen_N"/>
</dbReference>
<dbReference type="InterPro" id="IPR037517">
    <property type="entry name" value="HDAG_dom"/>
</dbReference>
<dbReference type="InterPro" id="IPR002506">
    <property type="entry name" value="HDV_ag"/>
</dbReference>
<dbReference type="Pfam" id="PF01517">
    <property type="entry name" value="HDV_ag"/>
    <property type="match status" value="1"/>
</dbReference>
<dbReference type="SUPFAM" id="SSF58108">
    <property type="entry name" value="Oligomerization domain of hepatitis delta antigen"/>
    <property type="match status" value="1"/>
</dbReference>
<dbReference type="PROSITE" id="PS51838">
    <property type="entry name" value="HDAG"/>
    <property type="match status" value="1"/>
</dbReference>
<accession>P0C6M6</accession>
<comment type="function">
    <text evidence="1">Following virus entry into host cell, provides nuclear import of HDV RNPs thanks to its nuclear localization signal. Needs co-infection with hepatitis B virus to provide surface proteins, otherwise there is no packaging or budding. Packages the HDV ribonucleoprotein in hepatitis B virus empty particles. Interacts with both HDV genomic RNA and cytoplasmic tail of HBsAg. May inhibit viral RNA replication (By similarity).</text>
</comment>
<comment type="subunit">
    <text evidence="1">Homodimer. Homooctamer. Interacts with HBV HBsAg. May interact with clathrin to induce virion budding (By similarity).</text>
</comment>
<comment type="subcellular location">
    <subcellularLocation>
        <location>Virion</location>
    </subcellularLocation>
    <subcellularLocation>
        <location>Host nucleus</location>
        <location>Host nucleolus</location>
    </subcellularLocation>
    <text evidence="1">isoprenylated in the cytoplasm, and translocates in the nucleus possibly after phosphorylation. Translocates after to nuclear speckle, then to the ER membrane where interaction with Hepatitis B virus antigene takes place (By similarity).</text>
</comment>
<comment type="PTM">
    <text evidence="1">Prenylated by host farnesyl-transferase in the cytoplasm prior to nucleus translocation.</text>
</comment>
<comment type="PTM">
    <text evidence="1">Phosphorylated at serines by host CK2 and other kinases. phosphorylation does not seem to be important for its function (By similarity).</text>
</comment>
<comment type="RNA editing">
    <location>
        <position position="196" evidence="7"/>
    </location>
    <text evidence="1">Partially edited. RNA editing at this position occurs on the antigenomic strand and consists of a conversion of A to G catalyzed by the cellular enzyme ADAR1. The unedited RNA version gives rise to the small delta antigen (AC Q91DH8), which ends with a nonsense codon at position 196. In the edited version, this amber codon is modified to a tryptophan codon and gives rise to the large delta antigen protein. S-HDAg suppresses editing of non-replicating antigenomic RNA, thereby regulating the extent of editing (By similarity).</text>
</comment>
<comment type="miscellaneous">
    <text>This strain belongs to the genotype III found only among cases in South America and which causes a more severe form of infection than genotypes I and II.</text>
</comment>
<comment type="similarity">
    <text evidence="8">Belongs to the hepatitis delta antigen family.</text>
</comment>
<proteinExistence type="inferred from homology"/>
<sequence>MSQSDXRSGXKAREEALEQWVEERKKKRIAEKELRRINKKIKKLEDENPWLGNVVGMLRKKKDEEGGPPAKRARREDMEIDSTPGRKSKARGFTDQERRDHRRRKALENKKKQLAGGGKNLSXEEEEELRRLARDDDERERRVAGPRPGGVNPMXGPPRGAPGGGFVPSLQGVPESPFSRTGEGIDIRGTQQFPWYGFTPPPPGYYWVPGCTQQ</sequence>
<keyword id="KW-0007">Acetylation</keyword>
<keyword id="KW-1048">Host nucleus</keyword>
<keyword id="KW-0449">Lipoprotein</keyword>
<keyword id="KW-0488">Methylation</keyword>
<keyword id="KW-0597">Phosphoprotein</keyword>
<keyword id="KW-0636">Prenylation</keyword>
<keyword id="KW-0691">RNA editing</keyword>
<keyword id="KW-0694">RNA-binding</keyword>
<keyword id="KW-1163">Viral penetration into host nucleus</keyword>
<keyword id="KW-0946">Virion</keyword>
<keyword id="KW-1160">Virus entry into host cell</keyword>
<reference key="1">
    <citation type="journal article" date="2001" name="J. Gen. Virol.">
        <title>Characterization of hepatitis D virus genotype III among Yucpa Indians in Venezuela.</title>
        <authorList>
            <person name="Nakano T."/>
            <person name="Shapiro C.N."/>
            <person name="Hadler S.C."/>
            <person name="Casey J.L."/>
            <person name="Mizokami M."/>
            <person name="Orito E."/>
            <person name="Robertson B.H."/>
        </authorList>
    </citation>
    <scope>NUCLEOTIDE SEQUENCE [GENOMIC RNA]</scope>
    <scope>RNA EDITING</scope>
</reference>
<reference key="2">
    <citation type="journal article" date="2005" name="Acta Virol.">
        <title>Hepatitis D.</title>
        <authorList>
            <person name="Husa P."/>
            <person name="Linhartova A."/>
            <person name="Nemecek V."/>
            <person name="Husova L."/>
        </authorList>
    </citation>
    <scope>REVIEW</scope>
</reference>
<reference key="3">
    <citation type="journal article" date="2006" name="Curr. Top. Microbiol. Immunol.">
        <title>Post-translational modification of delta antigen of hepatitis D virus.</title>
        <authorList>
            <person name="Huang W.H."/>
            <person name="Chen C.W."/>
            <person name="Wu H.L."/>
            <person name="Chen P.J."/>
        </authorList>
    </citation>
    <scope>REVIEW</scope>
</reference>
<evidence type="ECO:0000250" key="1"/>
<evidence type="ECO:0000250" key="2">
    <source>
        <dbReference type="UniProtKB" id="P0C6L3"/>
    </source>
</evidence>
<evidence type="ECO:0000250" key="3">
    <source>
        <dbReference type="UniProtKB" id="P29996"/>
    </source>
</evidence>
<evidence type="ECO:0000255" key="4"/>
<evidence type="ECO:0000255" key="5">
    <source>
        <dbReference type="PROSITE-ProRule" id="PRU01183"/>
    </source>
</evidence>
<evidence type="ECO:0000256" key="6">
    <source>
        <dbReference type="SAM" id="MobiDB-lite"/>
    </source>
</evidence>
<evidence type="ECO:0000269" key="7">
    <source>
    </source>
</evidence>
<evidence type="ECO:0000305" key="8"/>
<organism>
    <name type="scientific">Hepatitis delta virus genotype III (isolate VnzD8349)</name>
    <name type="common">HDV</name>
    <dbReference type="NCBI Taxonomy" id="261994"/>
    <lineage>
        <taxon>Viruses</taxon>
        <taxon>Ribozyviria</taxon>
        <taxon>Kolmioviridae</taxon>
        <taxon>Deltavirus</taxon>
        <taxon>Hepatitis delta virus</taxon>
    </lineage>
</organism>
<name>LHDAG_HDVV2</name>